<name>SURE_ANAD2</name>
<evidence type="ECO:0000255" key="1">
    <source>
        <dbReference type="HAMAP-Rule" id="MF_00060"/>
    </source>
</evidence>
<keyword id="KW-0963">Cytoplasm</keyword>
<keyword id="KW-0378">Hydrolase</keyword>
<keyword id="KW-0479">Metal-binding</keyword>
<keyword id="KW-0547">Nucleotide-binding</keyword>
<reference key="1">
    <citation type="submission" date="2009-01" db="EMBL/GenBank/DDBJ databases">
        <title>Complete sequence of Anaeromyxobacter dehalogenans 2CP-1.</title>
        <authorList>
            <person name="Lucas S."/>
            <person name="Copeland A."/>
            <person name="Lapidus A."/>
            <person name="Glavina del Rio T."/>
            <person name="Dalin E."/>
            <person name="Tice H."/>
            <person name="Bruce D."/>
            <person name="Goodwin L."/>
            <person name="Pitluck S."/>
            <person name="Saunders E."/>
            <person name="Brettin T."/>
            <person name="Detter J.C."/>
            <person name="Han C."/>
            <person name="Larimer F."/>
            <person name="Land M."/>
            <person name="Hauser L."/>
            <person name="Kyrpides N."/>
            <person name="Ovchinnikova G."/>
            <person name="Beliaev A.S."/>
            <person name="Richardson P."/>
        </authorList>
    </citation>
    <scope>NUCLEOTIDE SEQUENCE [LARGE SCALE GENOMIC DNA]</scope>
    <source>
        <strain>2CP-1 / ATCC BAA-258</strain>
    </source>
</reference>
<accession>B8JDR1</accession>
<feature type="chain" id="PRO_1000196581" description="5'-nucleotidase SurE">
    <location>
        <begin position="1"/>
        <end position="254"/>
    </location>
</feature>
<feature type="binding site" evidence="1">
    <location>
        <position position="8"/>
    </location>
    <ligand>
        <name>a divalent metal cation</name>
        <dbReference type="ChEBI" id="CHEBI:60240"/>
    </ligand>
</feature>
<feature type="binding site" evidence="1">
    <location>
        <position position="9"/>
    </location>
    <ligand>
        <name>a divalent metal cation</name>
        <dbReference type="ChEBI" id="CHEBI:60240"/>
    </ligand>
</feature>
<feature type="binding site" evidence="1">
    <location>
        <position position="38"/>
    </location>
    <ligand>
        <name>a divalent metal cation</name>
        <dbReference type="ChEBI" id="CHEBI:60240"/>
    </ligand>
</feature>
<feature type="binding site" evidence="1">
    <location>
        <position position="91"/>
    </location>
    <ligand>
        <name>a divalent metal cation</name>
        <dbReference type="ChEBI" id="CHEBI:60240"/>
    </ligand>
</feature>
<gene>
    <name evidence="1" type="primary">surE</name>
    <name type="ordered locus">A2cp1_0804</name>
</gene>
<comment type="function">
    <text evidence="1">Nucleotidase that shows phosphatase activity on nucleoside 5'-monophosphates.</text>
</comment>
<comment type="catalytic activity">
    <reaction evidence="1">
        <text>a ribonucleoside 5'-phosphate + H2O = a ribonucleoside + phosphate</text>
        <dbReference type="Rhea" id="RHEA:12484"/>
        <dbReference type="ChEBI" id="CHEBI:15377"/>
        <dbReference type="ChEBI" id="CHEBI:18254"/>
        <dbReference type="ChEBI" id="CHEBI:43474"/>
        <dbReference type="ChEBI" id="CHEBI:58043"/>
        <dbReference type="EC" id="3.1.3.5"/>
    </reaction>
</comment>
<comment type="cofactor">
    <cofactor evidence="1">
        <name>a divalent metal cation</name>
        <dbReference type="ChEBI" id="CHEBI:60240"/>
    </cofactor>
    <text evidence="1">Binds 1 divalent metal cation per subunit.</text>
</comment>
<comment type="subcellular location">
    <subcellularLocation>
        <location evidence="1">Cytoplasm</location>
    </subcellularLocation>
</comment>
<comment type="similarity">
    <text evidence="1">Belongs to the SurE nucleotidase family.</text>
</comment>
<protein>
    <recommendedName>
        <fullName evidence="1">5'-nucleotidase SurE</fullName>
        <ecNumber evidence="1">3.1.3.5</ecNumber>
    </recommendedName>
    <alternativeName>
        <fullName evidence="1">Nucleoside 5'-monophosphate phosphohydrolase</fullName>
    </alternativeName>
</protein>
<organism>
    <name type="scientific">Anaeromyxobacter dehalogenans (strain 2CP-1 / ATCC BAA-258)</name>
    <dbReference type="NCBI Taxonomy" id="455488"/>
    <lineage>
        <taxon>Bacteria</taxon>
        <taxon>Pseudomonadati</taxon>
        <taxon>Myxococcota</taxon>
        <taxon>Myxococcia</taxon>
        <taxon>Myxococcales</taxon>
        <taxon>Cystobacterineae</taxon>
        <taxon>Anaeromyxobacteraceae</taxon>
        <taxon>Anaeromyxobacter</taxon>
    </lineage>
</organism>
<dbReference type="EC" id="3.1.3.5" evidence="1"/>
<dbReference type="EMBL" id="CP001359">
    <property type="protein sequence ID" value="ACL64156.1"/>
    <property type="molecule type" value="Genomic_DNA"/>
</dbReference>
<dbReference type="RefSeq" id="WP_012632174.1">
    <property type="nucleotide sequence ID" value="NC_011891.1"/>
</dbReference>
<dbReference type="SMR" id="B8JDR1"/>
<dbReference type="KEGG" id="acp:A2cp1_0804"/>
<dbReference type="HOGENOM" id="CLU_045192_1_2_7"/>
<dbReference type="Proteomes" id="UP000007089">
    <property type="component" value="Chromosome"/>
</dbReference>
<dbReference type="GO" id="GO:0005737">
    <property type="term" value="C:cytoplasm"/>
    <property type="evidence" value="ECO:0007669"/>
    <property type="project" value="UniProtKB-SubCell"/>
</dbReference>
<dbReference type="GO" id="GO:0008254">
    <property type="term" value="F:3'-nucleotidase activity"/>
    <property type="evidence" value="ECO:0007669"/>
    <property type="project" value="TreeGrafter"/>
</dbReference>
<dbReference type="GO" id="GO:0008253">
    <property type="term" value="F:5'-nucleotidase activity"/>
    <property type="evidence" value="ECO:0007669"/>
    <property type="project" value="UniProtKB-UniRule"/>
</dbReference>
<dbReference type="GO" id="GO:0004309">
    <property type="term" value="F:exopolyphosphatase activity"/>
    <property type="evidence" value="ECO:0007669"/>
    <property type="project" value="TreeGrafter"/>
</dbReference>
<dbReference type="GO" id="GO:0046872">
    <property type="term" value="F:metal ion binding"/>
    <property type="evidence" value="ECO:0007669"/>
    <property type="project" value="UniProtKB-UniRule"/>
</dbReference>
<dbReference type="GO" id="GO:0000166">
    <property type="term" value="F:nucleotide binding"/>
    <property type="evidence" value="ECO:0007669"/>
    <property type="project" value="UniProtKB-KW"/>
</dbReference>
<dbReference type="FunFam" id="3.40.1210.10:FF:000001">
    <property type="entry name" value="5'/3'-nucleotidase SurE"/>
    <property type="match status" value="1"/>
</dbReference>
<dbReference type="Gene3D" id="3.40.1210.10">
    <property type="entry name" value="Survival protein SurE-like phosphatase/nucleotidase"/>
    <property type="match status" value="1"/>
</dbReference>
<dbReference type="HAMAP" id="MF_00060">
    <property type="entry name" value="SurE"/>
    <property type="match status" value="1"/>
</dbReference>
<dbReference type="InterPro" id="IPR030048">
    <property type="entry name" value="SurE"/>
</dbReference>
<dbReference type="InterPro" id="IPR002828">
    <property type="entry name" value="SurE-like_Pase/nucleotidase"/>
</dbReference>
<dbReference type="InterPro" id="IPR036523">
    <property type="entry name" value="SurE-like_sf"/>
</dbReference>
<dbReference type="NCBIfam" id="NF001490">
    <property type="entry name" value="PRK00346.1-4"/>
    <property type="match status" value="1"/>
</dbReference>
<dbReference type="NCBIfam" id="TIGR00087">
    <property type="entry name" value="surE"/>
    <property type="match status" value="1"/>
</dbReference>
<dbReference type="PANTHER" id="PTHR30457">
    <property type="entry name" value="5'-NUCLEOTIDASE SURE"/>
    <property type="match status" value="1"/>
</dbReference>
<dbReference type="PANTHER" id="PTHR30457:SF12">
    <property type="entry name" value="5'_3'-NUCLEOTIDASE SURE"/>
    <property type="match status" value="1"/>
</dbReference>
<dbReference type="Pfam" id="PF01975">
    <property type="entry name" value="SurE"/>
    <property type="match status" value="1"/>
</dbReference>
<dbReference type="SUPFAM" id="SSF64167">
    <property type="entry name" value="SurE-like"/>
    <property type="match status" value="1"/>
</dbReference>
<sequence>MRVLLSNDDGVHAAGLKALAEAFHGDEVWVVAPDREQSASSHAISLHRPLRLLEVAPRWYAVDGTPTDAVYMGLNLVLRDARPDVVVSGVNHGPNLGNDVLYSGTVAAAMEGALLGVNAIAVSLAAPPPHDFGEAARFAAALARQVVARPPPAPVLLNVNVPPGPVRGYRFARLGRRTYGNEVVEKTDPRGRKYYWIGGEGRVHNEDIPGSDCNTVLLERLAAVTPLHLDGTHDPMFQELRSWTVPGYEKEPAP</sequence>
<proteinExistence type="inferred from homology"/>